<gene>
    <name evidence="6" type="primary">srpa-72</name>
    <name evidence="6" type="ORF">F08D12.1</name>
</gene>
<name>SRP72_CAEEL</name>
<reference key="1">
    <citation type="journal article" date="1998" name="Science">
        <title>Genome sequence of the nematode C. elegans: a platform for investigating biology.</title>
        <authorList>
            <consortium name="The C. elegans sequencing consortium"/>
        </authorList>
    </citation>
    <scope>NUCLEOTIDE SEQUENCE [LARGE SCALE GENOMIC DNA]</scope>
    <source>
        <strain>Bristol N2</strain>
    </source>
</reference>
<evidence type="ECO:0000250" key="1">
    <source>
        <dbReference type="UniProtKB" id="O76094"/>
    </source>
</evidence>
<evidence type="ECO:0000250" key="2">
    <source>
        <dbReference type="UniProtKB" id="P33731"/>
    </source>
</evidence>
<evidence type="ECO:0000250" key="3">
    <source>
        <dbReference type="UniProtKB" id="P38688"/>
    </source>
</evidence>
<evidence type="ECO:0000256" key="4">
    <source>
        <dbReference type="SAM" id="MobiDB-lite"/>
    </source>
</evidence>
<evidence type="ECO:0000305" key="5"/>
<evidence type="ECO:0000312" key="6">
    <source>
        <dbReference type="WormBase" id="F08D12.1"/>
    </source>
</evidence>
<comment type="function">
    <text evidence="1 3">Component of the signal recognition particle (SRP) complex, a ribonucleoprotein complex that mediates the cotranslational targeting of secretory and membrane proteins to the endoplasmic reticulum (ER) (By similarity). The SRP complex interacts with the signal sequence in nascent secretory and membrane proteins and directs them to the membrane of the ER (By similarity). The SRP complex targets the ribosome-nascent chain complex to the SRP receptor (SR), which is anchored in the ER, where SR compaction and GTPase rearrangement drive cotranslational protein translocation into the ER (By similarity). Binds the signal recognition particle RNA (7SL RNA) in presence of srpa-68 (By similarity). Can bind 7SL RNA with low affinity (By similarity). The SRP complex possibly participates in the elongation arrest function (By similarity).</text>
</comment>
<comment type="subunit">
    <text evidence="1 2">Heterodimer with srpa-68 (By similarity). Srpa-68-srpa-72 heterodimer formation is stabilized by the presence of 7SL RNA (By similarity). Component of a signal recognition particle (SRP) complex that consists of a 7SL RNA molecule of 300 nucleotides and six protein subunits: srpa-72, srpa-68, SRP54, F37F2.2/SRP19, F25G6.8/SRP14 and ZK512.4/SRP9 (By similarity). Within the SRP complex, interacts (via N-terminus) with srpa-68 (via C-terminus) (By similarity).</text>
</comment>
<comment type="subcellular location">
    <subcellularLocation>
        <location evidence="1">Cytoplasm</location>
    </subcellularLocation>
    <subcellularLocation>
        <location evidence="1">Endoplasmic reticulum</location>
    </subcellularLocation>
</comment>
<comment type="similarity">
    <text evidence="5">Belongs to the SRP72 family.</text>
</comment>
<accession>P91240</accession>
<proteinExistence type="inferred from homology"/>
<dbReference type="EMBL" id="FO081086">
    <property type="protein sequence ID" value="CCD69012.1"/>
    <property type="molecule type" value="Genomic_DNA"/>
</dbReference>
<dbReference type="PIR" id="T25685">
    <property type="entry name" value="T25685"/>
</dbReference>
<dbReference type="RefSeq" id="NP_494366.2">
    <property type="nucleotide sequence ID" value="NM_061965.7"/>
</dbReference>
<dbReference type="SMR" id="P91240"/>
<dbReference type="BioGRID" id="38989">
    <property type="interactions" value="10"/>
</dbReference>
<dbReference type="FunCoup" id="P91240">
    <property type="interactions" value="2490"/>
</dbReference>
<dbReference type="STRING" id="6239.F08D12.1.1"/>
<dbReference type="PaxDb" id="6239-F08D12.1"/>
<dbReference type="PeptideAtlas" id="P91240"/>
<dbReference type="EnsemblMetazoa" id="F08D12.1.1">
    <property type="protein sequence ID" value="F08D12.1.1"/>
    <property type="gene ID" value="WBGene00017245"/>
</dbReference>
<dbReference type="GeneID" id="173625"/>
<dbReference type="KEGG" id="cel:CELE_F08D12.1"/>
<dbReference type="UCSC" id="F08D12.1">
    <property type="organism name" value="c. elegans"/>
</dbReference>
<dbReference type="AGR" id="WB:WBGene00017245"/>
<dbReference type="CTD" id="173625"/>
<dbReference type="WormBase" id="F08D12.1">
    <property type="protein sequence ID" value="CE41557"/>
    <property type="gene ID" value="WBGene00017245"/>
    <property type="gene designation" value="srpa-72"/>
</dbReference>
<dbReference type="eggNOG" id="KOG2376">
    <property type="taxonomic scope" value="Eukaryota"/>
</dbReference>
<dbReference type="GeneTree" id="ENSGT00390000013264"/>
<dbReference type="HOGENOM" id="CLU_013808_1_0_1"/>
<dbReference type="InParanoid" id="P91240"/>
<dbReference type="OMA" id="NDMKVLA"/>
<dbReference type="OrthoDB" id="5421607at2759"/>
<dbReference type="PhylomeDB" id="P91240"/>
<dbReference type="Reactome" id="R-CEL-1799339">
    <property type="pathway name" value="SRP-dependent cotranslational protein targeting to membrane"/>
</dbReference>
<dbReference type="PRO" id="PR:P91240"/>
<dbReference type="Proteomes" id="UP000001940">
    <property type="component" value="Chromosome II"/>
</dbReference>
<dbReference type="Bgee" id="WBGene00017245">
    <property type="expression patterns" value="Expressed in pharyngeal muscle cell (C elegans) and 4 other cell types or tissues"/>
</dbReference>
<dbReference type="GO" id="GO:0005783">
    <property type="term" value="C:endoplasmic reticulum"/>
    <property type="evidence" value="ECO:0007669"/>
    <property type="project" value="UniProtKB-SubCell"/>
</dbReference>
<dbReference type="GO" id="GO:0005786">
    <property type="term" value="C:signal recognition particle, endoplasmic reticulum targeting"/>
    <property type="evidence" value="ECO:0000318"/>
    <property type="project" value="GO_Central"/>
</dbReference>
<dbReference type="GO" id="GO:0008312">
    <property type="term" value="F:7S RNA binding"/>
    <property type="evidence" value="ECO:0000318"/>
    <property type="project" value="GO_Central"/>
</dbReference>
<dbReference type="GO" id="GO:0006614">
    <property type="term" value="P:SRP-dependent cotranslational protein targeting to membrane"/>
    <property type="evidence" value="ECO:0000318"/>
    <property type="project" value="GO_Central"/>
</dbReference>
<dbReference type="FunFam" id="1.25.40.10:FF:000062">
    <property type="entry name" value="Signal recognition particle subunit SRP72"/>
    <property type="match status" value="1"/>
</dbReference>
<dbReference type="FunFam" id="1.25.40.10:FF:002804">
    <property type="entry name" value="Signal recognition particle subunit SRP72"/>
    <property type="match status" value="1"/>
</dbReference>
<dbReference type="Gene3D" id="1.25.40.10">
    <property type="entry name" value="Tetratricopeptide repeat domain"/>
    <property type="match status" value="2"/>
</dbReference>
<dbReference type="InterPro" id="IPR013699">
    <property type="entry name" value="Signal_recog_part_SRP72_RNA-bd"/>
</dbReference>
<dbReference type="InterPro" id="IPR026270">
    <property type="entry name" value="SRP72"/>
</dbReference>
<dbReference type="InterPro" id="IPR031545">
    <property type="entry name" value="SRP72_TPR-like"/>
</dbReference>
<dbReference type="InterPro" id="IPR011990">
    <property type="entry name" value="TPR-like_helical_dom_sf"/>
</dbReference>
<dbReference type="InterPro" id="IPR019734">
    <property type="entry name" value="TPR_rpt"/>
</dbReference>
<dbReference type="PANTHER" id="PTHR14094">
    <property type="entry name" value="SIGNAL RECOGNITION PARTICLE 72"/>
    <property type="match status" value="1"/>
</dbReference>
<dbReference type="PANTHER" id="PTHR14094:SF9">
    <property type="entry name" value="SIGNAL RECOGNITION PARTICLE SUBUNIT SRP72"/>
    <property type="match status" value="1"/>
</dbReference>
<dbReference type="Pfam" id="PF08492">
    <property type="entry name" value="SRP72"/>
    <property type="match status" value="1"/>
</dbReference>
<dbReference type="Pfam" id="PF17004">
    <property type="entry name" value="SRP_TPR_like"/>
    <property type="match status" value="1"/>
</dbReference>
<dbReference type="PIRSF" id="PIRSF038922">
    <property type="entry name" value="SRP72"/>
    <property type="match status" value="1"/>
</dbReference>
<dbReference type="SMART" id="SM00028">
    <property type="entry name" value="TPR"/>
    <property type="match status" value="3"/>
</dbReference>
<dbReference type="SUPFAM" id="SSF48452">
    <property type="entry name" value="TPR-like"/>
    <property type="match status" value="2"/>
</dbReference>
<protein>
    <recommendedName>
        <fullName>Signal recognition particle subunit SRP72</fullName>
        <shortName>SRP72</shortName>
    </recommendedName>
    <alternativeName>
        <fullName>Signal recognition particle 72 kDa protein homolog</fullName>
    </alternativeName>
</protein>
<keyword id="KW-0963">Cytoplasm</keyword>
<keyword id="KW-0256">Endoplasmic reticulum</keyword>
<keyword id="KW-1185">Reference proteome</keyword>
<keyword id="KW-0677">Repeat</keyword>
<keyword id="KW-0687">Ribonucleoprotein</keyword>
<keyword id="KW-0733">Signal recognition particle</keyword>
<keyword id="KW-0802">TPR repeat</keyword>
<feature type="chain" id="PRO_0000135235" description="Signal recognition particle subunit SRP72">
    <location>
        <begin position="1"/>
        <end position="635"/>
    </location>
</feature>
<feature type="repeat" description="TPR 1">
    <location>
        <begin position="7"/>
        <end position="42"/>
    </location>
</feature>
<feature type="repeat" description="TPR 2">
    <location>
        <begin position="75"/>
        <end position="105"/>
    </location>
</feature>
<feature type="repeat" description="TPR 3">
    <location>
        <begin position="106"/>
        <end position="139"/>
    </location>
</feature>
<feature type="repeat" description="TPR 4">
    <location>
        <begin position="171"/>
        <end position="204"/>
    </location>
</feature>
<feature type="repeat" description="TPR 5">
    <location>
        <begin position="220"/>
        <end position="253"/>
    </location>
</feature>
<feature type="repeat" description="TPR 6">
    <location>
        <begin position="255"/>
        <end position="290"/>
    </location>
</feature>
<feature type="repeat" description="TPR 7">
    <location>
        <begin position="436"/>
        <end position="469"/>
    </location>
</feature>
<feature type="region of interest" description="Disordered" evidence="4">
    <location>
        <begin position="539"/>
        <end position="635"/>
    </location>
</feature>
<feature type="compositionally biased region" description="Basic and acidic residues" evidence="4">
    <location>
        <begin position="557"/>
        <end position="569"/>
    </location>
</feature>
<feature type="compositionally biased region" description="Basic residues" evidence="4">
    <location>
        <begin position="625"/>
        <end position="635"/>
    </location>
</feature>
<sequence length="635" mass="71414">MADASAGGLYQCLTDISRADTSGDYQKALTSANKLIRKYPKETFAFKCKLVAQIQLSQYADALELIRKTPAHQMGHVGFEKAYIHYRQDELDEAIKELNTCDKDDVKALELKAQVFYKQENYQQAYDIYLYLLKNHSDDSDELRRANFLAVQARLEAQGVKQAVAETEDSYSQLYNRACVEIEAEKLPQALESLEKALKTCRKSFEDEDREEDEIEEELDSIRVQKAYVLQRMGQKAEALAIYEKVQAANHPDSSVKATITNNIPAASSDFALPESRKRFKAALQIDQTKLTRRQRLTLMLNNALVLLLSNQREPCKRALEELVAKFGSSKDVALIEATLHFKMGDAEAALKVLAGSDLEQSLARLHVLLNAGRLPEAVGAIRDLPISGKLGASSLLTSTLIAADSRDEAVKELVAASTAKNQTPEALKSILEDLVEVEQQRGNETAATKHLEKLVEKFPEDLQLQCRLVGAYSKTDPKKAESLSAKLFPETMEVDVNVDELEDSDWILYGEKYRQKKEAKSPQTAEIAATRKLKIATKRKRKIRLPKNYNSAVTPDPERWLPRQERSTYKRKRKNREREIGRGTQGSSSANPNVEYVTASPNSPRPLPGPVAEGPRQQRPNFQKQKKKKNASKF</sequence>
<organism>
    <name type="scientific">Caenorhabditis elegans</name>
    <dbReference type="NCBI Taxonomy" id="6239"/>
    <lineage>
        <taxon>Eukaryota</taxon>
        <taxon>Metazoa</taxon>
        <taxon>Ecdysozoa</taxon>
        <taxon>Nematoda</taxon>
        <taxon>Chromadorea</taxon>
        <taxon>Rhabditida</taxon>
        <taxon>Rhabditina</taxon>
        <taxon>Rhabditomorpha</taxon>
        <taxon>Rhabditoidea</taxon>
        <taxon>Rhabditidae</taxon>
        <taxon>Peloderinae</taxon>
        <taxon>Caenorhabditis</taxon>
    </lineage>
</organism>